<feature type="signal peptide" evidence="4">
    <location>
        <begin position="1"/>
        <end position="18"/>
    </location>
</feature>
<feature type="chain" id="PRO_0000233109" description="Probable cutinase 1">
    <location>
        <begin position="19"/>
        <end position="211"/>
    </location>
</feature>
<feature type="active site" description="Nucleophile" evidence="1">
    <location>
        <position position="125"/>
    </location>
</feature>
<feature type="active site" evidence="1">
    <location>
        <position position="180"/>
    </location>
</feature>
<feature type="active site" description="Proton donor/acceptor" evidence="1">
    <location>
        <position position="193"/>
    </location>
</feature>
<feature type="site" description="Transition state stabilizer" evidence="1">
    <location>
        <position position="47"/>
    </location>
</feature>
<feature type="site" description="Transition state stabilizer" evidence="1">
    <location>
        <position position="126"/>
    </location>
</feature>
<feature type="disulfide bond" evidence="3">
    <location>
        <begin position="36"/>
        <end position="114"/>
    </location>
</feature>
<feature type="disulfide bond" evidence="3">
    <location>
        <begin position="62"/>
        <end position="75"/>
    </location>
</feature>
<feature type="disulfide bond" evidence="3">
    <location>
        <begin position="176"/>
        <end position="183"/>
    </location>
</feature>
<keyword id="KW-1015">Disulfide bond</keyword>
<keyword id="KW-0378">Hydrolase</keyword>
<keyword id="KW-1185">Reference proteome</keyword>
<keyword id="KW-0964">Secreted</keyword>
<keyword id="KW-0719">Serine esterase</keyword>
<keyword id="KW-0732">Signal</keyword>
<reference key="1">
    <citation type="journal article" date="2005" name="Nature">
        <title>Genomic sequence of the pathogenic and allergenic filamentous fungus Aspergillus fumigatus.</title>
        <authorList>
            <person name="Nierman W.C."/>
            <person name="Pain A."/>
            <person name="Anderson M.J."/>
            <person name="Wortman J.R."/>
            <person name="Kim H.S."/>
            <person name="Arroyo J."/>
            <person name="Berriman M."/>
            <person name="Abe K."/>
            <person name="Archer D.B."/>
            <person name="Bermejo C."/>
            <person name="Bennett J.W."/>
            <person name="Bowyer P."/>
            <person name="Chen D."/>
            <person name="Collins M."/>
            <person name="Coulsen R."/>
            <person name="Davies R."/>
            <person name="Dyer P.S."/>
            <person name="Farman M.L."/>
            <person name="Fedorova N."/>
            <person name="Fedorova N.D."/>
            <person name="Feldblyum T.V."/>
            <person name="Fischer R."/>
            <person name="Fosker N."/>
            <person name="Fraser A."/>
            <person name="Garcia J.L."/>
            <person name="Garcia M.J."/>
            <person name="Goble A."/>
            <person name="Goldman G.H."/>
            <person name="Gomi K."/>
            <person name="Griffith-Jones S."/>
            <person name="Gwilliam R."/>
            <person name="Haas B.J."/>
            <person name="Haas H."/>
            <person name="Harris D.E."/>
            <person name="Horiuchi H."/>
            <person name="Huang J."/>
            <person name="Humphray S."/>
            <person name="Jimenez J."/>
            <person name="Keller N."/>
            <person name="Khouri H."/>
            <person name="Kitamoto K."/>
            <person name="Kobayashi T."/>
            <person name="Konzack S."/>
            <person name="Kulkarni R."/>
            <person name="Kumagai T."/>
            <person name="Lafton A."/>
            <person name="Latge J.-P."/>
            <person name="Li W."/>
            <person name="Lord A."/>
            <person name="Lu C."/>
            <person name="Majoros W.H."/>
            <person name="May G.S."/>
            <person name="Miller B.L."/>
            <person name="Mohamoud Y."/>
            <person name="Molina M."/>
            <person name="Monod M."/>
            <person name="Mouyna I."/>
            <person name="Mulligan S."/>
            <person name="Murphy L.D."/>
            <person name="O'Neil S."/>
            <person name="Paulsen I."/>
            <person name="Penalva M.A."/>
            <person name="Pertea M."/>
            <person name="Price C."/>
            <person name="Pritchard B.L."/>
            <person name="Quail M.A."/>
            <person name="Rabbinowitsch E."/>
            <person name="Rawlins N."/>
            <person name="Rajandream M.A."/>
            <person name="Reichard U."/>
            <person name="Renauld H."/>
            <person name="Robson G.D."/>
            <person name="Rodriguez de Cordoba S."/>
            <person name="Rodriguez-Pena J.M."/>
            <person name="Ronning C.M."/>
            <person name="Rutter S."/>
            <person name="Salzberg S.L."/>
            <person name="Sanchez M."/>
            <person name="Sanchez-Ferrero J.C."/>
            <person name="Saunders D."/>
            <person name="Seeger K."/>
            <person name="Squares R."/>
            <person name="Squares S."/>
            <person name="Takeuchi M."/>
            <person name="Tekaia F."/>
            <person name="Turner G."/>
            <person name="Vazquez de Aldana C.R."/>
            <person name="Weidman J."/>
            <person name="White O."/>
            <person name="Woodward J.R."/>
            <person name="Yu J.-H."/>
            <person name="Fraser C.M."/>
            <person name="Galagan J.E."/>
            <person name="Asai K."/>
            <person name="Machida M."/>
            <person name="Hall N."/>
            <person name="Barrell B.G."/>
            <person name="Denning D.W."/>
        </authorList>
    </citation>
    <scope>NUCLEOTIDE SEQUENCE [LARGE SCALE GENOMIC DNA]</scope>
    <source>
        <strain>ATCC MYA-4609 / CBS 101355 / FGSC A1100 / Af293</strain>
    </source>
</reference>
<dbReference type="EC" id="3.1.1.74" evidence="5 6"/>
<dbReference type="EMBL" id="AAHF01000001">
    <property type="protein sequence ID" value="EAL93235.1"/>
    <property type="molecule type" value="Genomic_DNA"/>
</dbReference>
<dbReference type="RefSeq" id="XP_755273.1">
    <property type="nucleotide sequence ID" value="XM_750180.1"/>
</dbReference>
<dbReference type="SMR" id="Q4X1N0"/>
<dbReference type="STRING" id="330879.Q4X1N0"/>
<dbReference type="ESTHER" id="aspfu-q4x1n0">
    <property type="family name" value="Cutinase"/>
</dbReference>
<dbReference type="EnsemblFungi" id="EAL93235">
    <property type="protein sequence ID" value="EAL93235"/>
    <property type="gene ID" value="AFUA_2G09380"/>
</dbReference>
<dbReference type="GeneID" id="3513265"/>
<dbReference type="KEGG" id="afm:AFUA_2G09380"/>
<dbReference type="VEuPathDB" id="FungiDB:Afu2g09380"/>
<dbReference type="eggNOG" id="ENOG502SI38">
    <property type="taxonomic scope" value="Eukaryota"/>
</dbReference>
<dbReference type="HOGENOM" id="CLU_040058_2_0_1"/>
<dbReference type="InParanoid" id="Q4X1N0"/>
<dbReference type="OMA" id="CEPITFI"/>
<dbReference type="OrthoDB" id="3225429at2759"/>
<dbReference type="Proteomes" id="UP000002530">
    <property type="component" value="Chromosome 2"/>
</dbReference>
<dbReference type="GO" id="GO:0005576">
    <property type="term" value="C:extracellular region"/>
    <property type="evidence" value="ECO:0007669"/>
    <property type="project" value="UniProtKB-SubCell"/>
</dbReference>
<dbReference type="GO" id="GO:0106435">
    <property type="term" value="F:carboxylesterase activity"/>
    <property type="evidence" value="ECO:0000318"/>
    <property type="project" value="GO_Central"/>
</dbReference>
<dbReference type="GO" id="GO:0050525">
    <property type="term" value="F:cutinase activity"/>
    <property type="evidence" value="ECO:0000250"/>
    <property type="project" value="UniProtKB"/>
</dbReference>
<dbReference type="GO" id="GO:0016298">
    <property type="term" value="F:lipase activity"/>
    <property type="evidence" value="ECO:0000318"/>
    <property type="project" value="GO_Central"/>
</dbReference>
<dbReference type="GO" id="GO:0016042">
    <property type="term" value="P:lipid catabolic process"/>
    <property type="evidence" value="ECO:0000318"/>
    <property type="project" value="GO_Central"/>
</dbReference>
<dbReference type="FunFam" id="3.40.50.1820:FF:000235">
    <property type="entry name" value="Cutinase 1"/>
    <property type="match status" value="1"/>
</dbReference>
<dbReference type="Gene3D" id="3.40.50.1820">
    <property type="entry name" value="alpha/beta hydrolase"/>
    <property type="match status" value="1"/>
</dbReference>
<dbReference type="InterPro" id="IPR029058">
    <property type="entry name" value="AB_hydrolase_fold"/>
</dbReference>
<dbReference type="InterPro" id="IPR000675">
    <property type="entry name" value="Cutinase/axe"/>
</dbReference>
<dbReference type="InterPro" id="IPR043580">
    <property type="entry name" value="CUTINASE_1"/>
</dbReference>
<dbReference type="InterPro" id="IPR043579">
    <property type="entry name" value="CUTINASE_2"/>
</dbReference>
<dbReference type="InterPro" id="IPR011150">
    <property type="entry name" value="Cutinase_monf"/>
</dbReference>
<dbReference type="PANTHER" id="PTHR48250:SF3">
    <property type="entry name" value="CUTINASE 1-RELATED"/>
    <property type="match status" value="1"/>
</dbReference>
<dbReference type="PANTHER" id="PTHR48250">
    <property type="entry name" value="CUTINASE 2-RELATED"/>
    <property type="match status" value="1"/>
</dbReference>
<dbReference type="Pfam" id="PF01083">
    <property type="entry name" value="Cutinase"/>
    <property type="match status" value="1"/>
</dbReference>
<dbReference type="PRINTS" id="PR00129">
    <property type="entry name" value="CUTINASE"/>
</dbReference>
<dbReference type="SMART" id="SM01110">
    <property type="entry name" value="Cutinase"/>
    <property type="match status" value="1"/>
</dbReference>
<dbReference type="SUPFAM" id="SSF53474">
    <property type="entry name" value="alpha/beta-Hydrolases"/>
    <property type="match status" value="1"/>
</dbReference>
<dbReference type="PROSITE" id="PS00155">
    <property type="entry name" value="CUTINASE_1"/>
    <property type="match status" value="1"/>
</dbReference>
<dbReference type="PROSITE" id="PS00931">
    <property type="entry name" value="CUTINASE_2"/>
    <property type="match status" value="1"/>
</dbReference>
<name>CUTI1_ASPFU</name>
<organism>
    <name type="scientific">Aspergillus fumigatus (strain ATCC MYA-4609 / CBS 101355 / FGSC A1100 / Af293)</name>
    <name type="common">Neosartorya fumigata</name>
    <dbReference type="NCBI Taxonomy" id="330879"/>
    <lineage>
        <taxon>Eukaryota</taxon>
        <taxon>Fungi</taxon>
        <taxon>Dikarya</taxon>
        <taxon>Ascomycota</taxon>
        <taxon>Pezizomycotina</taxon>
        <taxon>Eurotiomycetes</taxon>
        <taxon>Eurotiomycetidae</taxon>
        <taxon>Eurotiales</taxon>
        <taxon>Aspergillaceae</taxon>
        <taxon>Aspergillus</taxon>
        <taxon>Aspergillus subgen. Fumigati</taxon>
    </lineage>
</organism>
<proteinExistence type="inferred from homology"/>
<gene>
    <name type="ORF">AFUA_2G09380</name>
</gene>
<evidence type="ECO:0000250" key="1">
    <source>
        <dbReference type="UniProtKB" id="P00590"/>
    </source>
</evidence>
<evidence type="ECO:0000250" key="2">
    <source>
        <dbReference type="UniProtKB" id="P11373"/>
    </source>
</evidence>
<evidence type="ECO:0000250" key="3">
    <source>
        <dbReference type="UniProtKB" id="P52956"/>
    </source>
</evidence>
<evidence type="ECO:0000255" key="4"/>
<evidence type="ECO:0000255" key="5">
    <source>
        <dbReference type="PROSITE-ProRule" id="PRU10108"/>
    </source>
</evidence>
<evidence type="ECO:0000255" key="6">
    <source>
        <dbReference type="PROSITE-ProRule" id="PRU10109"/>
    </source>
</evidence>
<evidence type="ECO:0000305" key="7"/>
<protein>
    <recommendedName>
        <fullName>Probable cutinase 1</fullName>
        <ecNumber evidence="5 6">3.1.1.74</ecNumber>
    </recommendedName>
    <alternativeName>
        <fullName>Cutin hydrolase 1</fullName>
    </alternativeName>
</protein>
<comment type="function">
    <text evidence="1">Catalyzes the hydrolysis of complex carboxylic polyesters found in the cell wall of plants (By similarity). Degrades cutin, a macromolecule that forms the structure of the plant cuticle (By similarity).</text>
</comment>
<comment type="catalytic activity">
    <reaction evidence="5 6">
        <text>cutin + H2O = cutin monomers.</text>
        <dbReference type="EC" id="3.1.1.74"/>
    </reaction>
</comment>
<comment type="subcellular location">
    <subcellularLocation>
        <location evidence="2">Secreted</location>
    </subcellularLocation>
</comment>
<comment type="similarity">
    <text evidence="7">Belongs to the cutinase family.</text>
</comment>
<accession>Q4X1N0</accession>
<sequence>MKFALLSLAAMAVASPVAIDVRQTAITGDELRTGPCEPITFIFARGSTEPGLLGITTGPGVCNALKLSRPGQVACQGVGPAYIADLASNFLPQGTSQVAIDEAAGLFKLAASKCPDTKIVAGGYSQGAAVMHGAIRNLPSNVQNMIKGVVLFGDTRNKQDGGRIPNFPTDRTKIYCAFGDLVCDGTLIITPAHLSYGDDVPSATSFLLSKV</sequence>